<name>PLAG1_RAT</name>
<feature type="chain" id="PRO_0000295109" description="Zinc finger protein PLAG1">
    <location>
        <begin position="1"/>
        <end position="499"/>
    </location>
</feature>
<feature type="zinc finger region" description="C2H2-type 1" evidence="2">
    <location>
        <begin position="34"/>
        <end position="56"/>
    </location>
</feature>
<feature type="zinc finger region" description="C2H2-type 2" evidence="2">
    <location>
        <begin position="62"/>
        <end position="86"/>
    </location>
</feature>
<feature type="zinc finger region" description="C2H2-type 3" evidence="2">
    <location>
        <begin position="92"/>
        <end position="114"/>
    </location>
</feature>
<feature type="zinc finger region" description="C2H2-type 4" evidence="2">
    <location>
        <begin position="121"/>
        <end position="143"/>
    </location>
</feature>
<feature type="zinc finger region" description="C2H2-type 5" evidence="2">
    <location>
        <begin position="150"/>
        <end position="172"/>
    </location>
</feature>
<feature type="zinc finger region" description="C2H2-type 6" evidence="2">
    <location>
        <begin position="185"/>
        <end position="207"/>
    </location>
</feature>
<feature type="zinc finger region" description="C2H2-type 7" evidence="2">
    <location>
        <begin position="213"/>
        <end position="236"/>
    </location>
</feature>
<feature type="region of interest" description="Disordered" evidence="3">
    <location>
        <begin position="1"/>
        <end position="33"/>
    </location>
</feature>
<feature type="region of interest" description="Interaction with KPNA2" evidence="1">
    <location>
        <begin position="2"/>
        <end position="84"/>
    </location>
</feature>
<feature type="region of interest" description="Decreased nuclear import with localization in the nucleus but also in the cytoplasm" evidence="1">
    <location>
        <begin position="41"/>
        <end position="242"/>
    </location>
</feature>
<feature type="region of interest" description="Activates transcription; Inhibition of nuclear import due to lack of NLS and KPNA2 interaction" evidence="1">
    <location>
        <begin position="243"/>
        <end position="499"/>
    </location>
</feature>
<feature type="region of interest" description="Repression domain; contains 3 sumoylation motifs and massively decrease transcription activity" evidence="1">
    <location>
        <begin position="243"/>
        <end position="383"/>
    </location>
</feature>
<feature type="region of interest" description="Disordered" evidence="3">
    <location>
        <begin position="364"/>
        <end position="400"/>
    </location>
</feature>
<feature type="region of interest" description="Massively activates transcription" evidence="1">
    <location>
        <begin position="384"/>
        <end position="499"/>
    </location>
</feature>
<feature type="short sequence motif" description="Nuclear localization signal" evidence="1">
    <location>
        <begin position="22"/>
        <end position="25"/>
    </location>
</feature>
<feature type="compositionally biased region" description="Low complexity" evidence="3">
    <location>
        <begin position="369"/>
        <end position="379"/>
    </location>
</feature>
<feature type="cross-link" description="Glycyl lysine isopeptide (Lys-Gly) (interchain with G-Cter in SUMO)" evidence="1">
    <location>
        <position position="244"/>
    </location>
</feature>
<feature type="cross-link" description="Glycyl lysine isopeptide (Lys-Gly) (interchain with G-Cter in SUMO)" evidence="1">
    <location>
        <position position="263"/>
    </location>
</feature>
<dbReference type="EMBL" id="BC085871">
    <property type="protein sequence ID" value="AAH85871.1"/>
    <property type="molecule type" value="mRNA"/>
</dbReference>
<dbReference type="RefSeq" id="NP_001008317.1">
    <property type="nucleotide sequence ID" value="NM_001008316.2"/>
</dbReference>
<dbReference type="RefSeq" id="XP_008761747.1">
    <property type="nucleotide sequence ID" value="XM_008763525.4"/>
</dbReference>
<dbReference type="RefSeq" id="XP_008761748.1">
    <property type="nucleotide sequence ID" value="XM_008763526.2"/>
</dbReference>
<dbReference type="RefSeq" id="XP_017448710.1">
    <property type="nucleotide sequence ID" value="XM_017593221.1"/>
</dbReference>
<dbReference type="RefSeq" id="XP_017448711.1">
    <property type="nucleotide sequence ID" value="XM_017593222.1"/>
</dbReference>
<dbReference type="RefSeq" id="XP_017448712.1">
    <property type="nucleotide sequence ID" value="XM_017593223.1"/>
</dbReference>
<dbReference type="RefSeq" id="XP_063143344.1">
    <property type="nucleotide sequence ID" value="XM_063287274.1"/>
</dbReference>
<dbReference type="RefSeq" id="XP_063143345.1">
    <property type="nucleotide sequence ID" value="XM_063287275.1"/>
</dbReference>
<dbReference type="RefSeq" id="XP_063143346.1">
    <property type="nucleotide sequence ID" value="XM_063287276.1"/>
</dbReference>
<dbReference type="RefSeq" id="XP_063143347.1">
    <property type="nucleotide sequence ID" value="XM_063287277.1"/>
</dbReference>
<dbReference type="SMR" id="Q5U2T6"/>
<dbReference type="FunCoup" id="Q5U2T6">
    <property type="interactions" value="732"/>
</dbReference>
<dbReference type="STRING" id="10116.ENSRNOP00000011721"/>
<dbReference type="PhosphoSitePlus" id="Q5U2T6"/>
<dbReference type="PaxDb" id="10116-ENSRNOP00000011721"/>
<dbReference type="Ensembl" id="ENSRNOT00000011721.5">
    <property type="protein sequence ID" value="ENSRNOP00000011721.3"/>
    <property type="gene ID" value="ENSRNOG00000008846.5"/>
</dbReference>
<dbReference type="GeneID" id="297804"/>
<dbReference type="KEGG" id="rno:297804"/>
<dbReference type="UCSC" id="RGD:1305286">
    <property type="organism name" value="rat"/>
</dbReference>
<dbReference type="AGR" id="RGD:1305286"/>
<dbReference type="CTD" id="5324"/>
<dbReference type="RGD" id="1305286">
    <property type="gene designation" value="Plag1"/>
</dbReference>
<dbReference type="eggNOG" id="KOG1721">
    <property type="taxonomic scope" value="Eukaryota"/>
</dbReference>
<dbReference type="GeneTree" id="ENSGT00940000159246"/>
<dbReference type="HOGENOM" id="CLU_002678_66_1_1"/>
<dbReference type="InParanoid" id="Q5U2T6"/>
<dbReference type="OMA" id="KEAFACQ"/>
<dbReference type="OrthoDB" id="29706at9989"/>
<dbReference type="PhylomeDB" id="Q5U2T6"/>
<dbReference type="TreeFam" id="TF332024"/>
<dbReference type="PRO" id="PR:Q5U2T6"/>
<dbReference type="Proteomes" id="UP000002494">
    <property type="component" value="Chromosome 5"/>
</dbReference>
<dbReference type="Bgee" id="ENSRNOG00000008846">
    <property type="expression patterns" value="Expressed in cerebellum and 15 other cell types or tissues"/>
</dbReference>
<dbReference type="GO" id="GO:0005813">
    <property type="term" value="C:centrosome"/>
    <property type="evidence" value="ECO:0007669"/>
    <property type="project" value="Ensembl"/>
</dbReference>
<dbReference type="GO" id="GO:0005829">
    <property type="term" value="C:cytosol"/>
    <property type="evidence" value="ECO:0007669"/>
    <property type="project" value="Ensembl"/>
</dbReference>
<dbReference type="GO" id="GO:0016607">
    <property type="term" value="C:nuclear speck"/>
    <property type="evidence" value="ECO:0007669"/>
    <property type="project" value="Ensembl"/>
</dbReference>
<dbReference type="GO" id="GO:0001228">
    <property type="term" value="F:DNA-binding transcription activator activity, RNA polymerase II-specific"/>
    <property type="evidence" value="ECO:0000266"/>
    <property type="project" value="RGD"/>
</dbReference>
<dbReference type="GO" id="GO:0000981">
    <property type="term" value="F:DNA-binding transcription factor activity, RNA polymerase II-specific"/>
    <property type="evidence" value="ECO:0000318"/>
    <property type="project" value="GO_Central"/>
</dbReference>
<dbReference type="GO" id="GO:0000978">
    <property type="term" value="F:RNA polymerase II cis-regulatory region sequence-specific DNA binding"/>
    <property type="evidence" value="ECO:0000266"/>
    <property type="project" value="RGD"/>
</dbReference>
<dbReference type="GO" id="GO:0008270">
    <property type="term" value="F:zinc ion binding"/>
    <property type="evidence" value="ECO:0007669"/>
    <property type="project" value="UniProtKB-KW"/>
</dbReference>
<dbReference type="GO" id="GO:0022612">
    <property type="term" value="P:gland morphogenesis"/>
    <property type="evidence" value="ECO:0000266"/>
    <property type="project" value="RGD"/>
</dbReference>
<dbReference type="GO" id="GO:0035264">
    <property type="term" value="P:multicellular organism growth"/>
    <property type="evidence" value="ECO:0000266"/>
    <property type="project" value="RGD"/>
</dbReference>
<dbReference type="GO" id="GO:0010629">
    <property type="term" value="P:negative regulation of gene expression"/>
    <property type="evidence" value="ECO:0000266"/>
    <property type="project" value="RGD"/>
</dbReference>
<dbReference type="GO" id="GO:0035265">
    <property type="term" value="P:organ growth"/>
    <property type="evidence" value="ECO:0000266"/>
    <property type="project" value="RGD"/>
</dbReference>
<dbReference type="GO" id="GO:0010628">
    <property type="term" value="P:positive regulation of gene expression"/>
    <property type="evidence" value="ECO:0000266"/>
    <property type="project" value="RGD"/>
</dbReference>
<dbReference type="GO" id="GO:0060252">
    <property type="term" value="P:positive regulation of glial cell proliferation"/>
    <property type="evidence" value="ECO:0000266"/>
    <property type="project" value="RGD"/>
</dbReference>
<dbReference type="GO" id="GO:0045944">
    <property type="term" value="P:positive regulation of transcription by RNA polymerase II"/>
    <property type="evidence" value="ECO:0000266"/>
    <property type="project" value="RGD"/>
</dbReference>
<dbReference type="GO" id="GO:0060736">
    <property type="term" value="P:prostate gland growth"/>
    <property type="evidence" value="ECO:0000266"/>
    <property type="project" value="RGD"/>
</dbReference>
<dbReference type="GO" id="GO:0006355">
    <property type="term" value="P:regulation of DNA-templated transcription"/>
    <property type="evidence" value="ECO:0000318"/>
    <property type="project" value="GO_Central"/>
</dbReference>
<dbReference type="FunFam" id="3.30.160.60:FF:000425">
    <property type="entry name" value="PLAG1 like zinc finger 1"/>
    <property type="match status" value="1"/>
</dbReference>
<dbReference type="FunFam" id="3.30.160.60:FF:000231">
    <property type="entry name" value="PLAG1 like zinc finger 2"/>
    <property type="match status" value="1"/>
</dbReference>
<dbReference type="FunFam" id="3.30.160.60:FF:000256">
    <property type="entry name" value="PLAG1 like zinc finger 2"/>
    <property type="match status" value="1"/>
</dbReference>
<dbReference type="FunFam" id="3.30.160.60:FF:001316">
    <property type="entry name" value="PR domain zinc finger protein 10"/>
    <property type="match status" value="1"/>
</dbReference>
<dbReference type="FunFam" id="3.30.160.60:FF:000125">
    <property type="entry name" value="Putative zinc finger protein 143"/>
    <property type="match status" value="1"/>
</dbReference>
<dbReference type="Gene3D" id="3.30.160.60">
    <property type="entry name" value="Classic Zinc Finger"/>
    <property type="match status" value="6"/>
</dbReference>
<dbReference type="InterPro" id="IPR050331">
    <property type="entry name" value="Zinc_finger"/>
</dbReference>
<dbReference type="InterPro" id="IPR036236">
    <property type="entry name" value="Znf_C2H2_sf"/>
</dbReference>
<dbReference type="InterPro" id="IPR013087">
    <property type="entry name" value="Znf_C2H2_type"/>
</dbReference>
<dbReference type="PANTHER" id="PTHR16515:SF23">
    <property type="entry name" value="PLAG1 LIKE ZINC FINGER 1"/>
    <property type="match status" value="1"/>
</dbReference>
<dbReference type="PANTHER" id="PTHR16515">
    <property type="entry name" value="PR DOMAIN ZINC FINGER PROTEIN"/>
    <property type="match status" value="1"/>
</dbReference>
<dbReference type="Pfam" id="PF00096">
    <property type="entry name" value="zf-C2H2"/>
    <property type="match status" value="3"/>
</dbReference>
<dbReference type="Pfam" id="PF13894">
    <property type="entry name" value="zf-C2H2_4"/>
    <property type="match status" value="1"/>
</dbReference>
<dbReference type="Pfam" id="PF12874">
    <property type="entry name" value="zf-met"/>
    <property type="match status" value="1"/>
</dbReference>
<dbReference type="SMART" id="SM00355">
    <property type="entry name" value="ZnF_C2H2"/>
    <property type="match status" value="7"/>
</dbReference>
<dbReference type="SUPFAM" id="SSF57667">
    <property type="entry name" value="beta-beta-alpha zinc fingers"/>
    <property type="match status" value="4"/>
</dbReference>
<dbReference type="PROSITE" id="PS00028">
    <property type="entry name" value="ZINC_FINGER_C2H2_1"/>
    <property type="match status" value="7"/>
</dbReference>
<dbReference type="PROSITE" id="PS50157">
    <property type="entry name" value="ZINC_FINGER_C2H2_2"/>
    <property type="match status" value="7"/>
</dbReference>
<organism>
    <name type="scientific">Rattus norvegicus</name>
    <name type="common">Rat</name>
    <dbReference type="NCBI Taxonomy" id="10116"/>
    <lineage>
        <taxon>Eukaryota</taxon>
        <taxon>Metazoa</taxon>
        <taxon>Chordata</taxon>
        <taxon>Craniata</taxon>
        <taxon>Vertebrata</taxon>
        <taxon>Euteleostomi</taxon>
        <taxon>Mammalia</taxon>
        <taxon>Eutheria</taxon>
        <taxon>Euarchontoglires</taxon>
        <taxon>Glires</taxon>
        <taxon>Rodentia</taxon>
        <taxon>Myomorpha</taxon>
        <taxon>Muroidea</taxon>
        <taxon>Muridae</taxon>
        <taxon>Murinae</taxon>
        <taxon>Rattus</taxon>
    </lineage>
</organism>
<evidence type="ECO:0000250" key="1"/>
<evidence type="ECO:0000255" key="2">
    <source>
        <dbReference type="PROSITE-ProRule" id="PRU00042"/>
    </source>
</evidence>
<evidence type="ECO:0000256" key="3">
    <source>
        <dbReference type="SAM" id="MobiDB-lite"/>
    </source>
</evidence>
<evidence type="ECO:0000305" key="4"/>
<keyword id="KW-0007">Acetylation</keyword>
<keyword id="KW-0010">Activator</keyword>
<keyword id="KW-0238">DNA-binding</keyword>
<keyword id="KW-1017">Isopeptide bond</keyword>
<keyword id="KW-0479">Metal-binding</keyword>
<keyword id="KW-0539">Nucleus</keyword>
<keyword id="KW-0656">Proto-oncogene</keyword>
<keyword id="KW-1185">Reference proteome</keyword>
<keyword id="KW-0677">Repeat</keyword>
<keyword id="KW-0804">Transcription</keyword>
<keyword id="KW-0805">Transcription regulation</keyword>
<keyword id="KW-0832">Ubl conjugation</keyword>
<keyword id="KW-0862">Zinc</keyword>
<keyword id="KW-0863">Zinc-finger</keyword>
<comment type="function">
    <text evidence="1">Transcription factor whose activation results in up-regulation of target genes, such as IGFII, leading to uncontrolled cell proliferation: when overexpressed in cultured cells, higher proliferation rate and transformation are observed. Other target genes such as CRLF1, CRABP2, CRIP2, PIGF are strongly induced in cells with PLAG1 induction. Proto-oncogene whose ectopic expression can trigger the development of pleomorphic adenomas of the salivary gland and lipoblastomas. Cooperates with CBFB-MYH11 (By similarity).</text>
</comment>
<comment type="subunit">
    <text evidence="1">Interacts with KPNA2, which escorts protein to the nucleus via interaction with nuclear localization signal. Interacts with E3 SUMO-protein ligase PIAS1, PIAS2 and PIAS4 (By similarity).</text>
</comment>
<comment type="subcellular location">
    <subcellularLocation>
        <location>Nucleus</location>
    </subcellularLocation>
    <text evidence="1">Strong nucleolar localization when sumoylation is inhibited.</text>
</comment>
<comment type="tissue specificity">
    <text>Expressed in heart, spleen, lung, kidney, brain, testis and epididymis but not in salivary glands.</text>
</comment>
<comment type="domain">
    <text evidence="1">C2H2-type zinc fingers 3 interacts with DNA-binding site G-clusterinc fingers. C2H2-type zinc fingers 6 and 7 interact with DNA-binding site core sequence (By similarity).</text>
</comment>
<comment type="PTM">
    <text evidence="1">Sumoylated with SUMO1; which inhibits transcriptional activity, but does not affect nuclear localization. Blockers of sumoylation pathway such as SENP3 and inactive UBE2I increases transcriptional capacity. Sumoylation is increased in the presence of PIAS1 (By similarity).</text>
</comment>
<comment type="PTM">
    <text evidence="1">Acetylated by lysine acetyltransferase EP300; which activates transcriptional capacity. Lysine residues that are sumoylated also seem to be target for acetylation (By similarity).</text>
</comment>
<comment type="similarity">
    <text evidence="4">Belongs to the krueppel C2H2-type zinc-finger protein family.</text>
</comment>
<reference key="1">
    <citation type="journal article" date="2004" name="Genome Res.">
        <title>The status, quality, and expansion of the NIH full-length cDNA project: the Mammalian Gene Collection (MGC).</title>
        <authorList>
            <consortium name="The MGC Project Team"/>
        </authorList>
    </citation>
    <scope>NUCLEOTIDE SEQUENCE [LARGE SCALE MRNA]</scope>
    <source>
        <tissue>Heart</tissue>
    </source>
</reference>
<protein>
    <recommendedName>
        <fullName>Zinc finger protein PLAG1</fullName>
    </recommendedName>
    <alternativeName>
        <fullName>Pleiomorphic adenoma gene 1 protein</fullName>
    </alternativeName>
</protein>
<gene>
    <name type="primary">Plag1</name>
</gene>
<sequence>MATVIPGDLSEVRDTQKAPSGKRKRGESKPRKNFPCQLCDKAFNSVEKLKVHSFSHTGERPYKCTHQDCTKAFVSKYKLQRHMATHSPEKTHKCNYCEKMFHRKDHLKNHLHTHDPNKETFKCEECGKSYNTKLGFKRHLALHAATSGDLTCKVCLQTFESTGVLLEHLKSHAGKSSGGVKEKKHQCEHCERRFYTRKDVRRHMVVHTGRKDFLCQYCAQRFGRKDHLTRHMKKSHNQELLKVKTEPVDFLDPFTCNMSVPIKDELLPVMSLPSSELLSKPFTNTLQLNLYNTPFQSMQSSGSTHQMITTLPLGMTCPIDMDTVHPSHHLAFKCPFSSTSYAISIPEKEQPLKGEIESYLMELQGGAPSSSQDSQASSSKLGLEPQSGSPDDGAGDLSLSKSSISISDPLNTPALDFSQLFNFIPLNGPPYNPLSVGSLGMSYSQDEAHSSVSQLPTQTQDLQDPANTVGLGSLHSLSAAFTSSLSSSTTLPRFHQAFQ</sequence>
<proteinExistence type="evidence at transcript level"/>
<accession>Q5U2T6</accession>